<evidence type="ECO:0000250" key="1"/>
<evidence type="ECO:0000255" key="2">
    <source>
        <dbReference type="PROSITE-ProRule" id="PRU01251"/>
    </source>
</evidence>
<evidence type="ECO:0000305" key="3"/>
<protein>
    <recommendedName>
        <fullName>Chaperone protein ClpB</fullName>
    </recommendedName>
</protein>
<dbReference type="EMBL" id="AL939117">
    <property type="protein sequence ID" value="CAD55328.1"/>
    <property type="molecule type" value="Genomic_DNA"/>
</dbReference>
<dbReference type="PIR" id="T36551">
    <property type="entry name" value="T36551"/>
</dbReference>
<dbReference type="RefSeq" id="NP_733613.1">
    <property type="nucleotide sequence ID" value="NC_003888.3"/>
</dbReference>
<dbReference type="RefSeq" id="WP_003975278.1">
    <property type="nucleotide sequence ID" value="NZ_VNID01000003.1"/>
</dbReference>
<dbReference type="SMR" id="Q8CJV9"/>
<dbReference type="FunCoup" id="Q8CJV9">
    <property type="interactions" value="245"/>
</dbReference>
<dbReference type="STRING" id="100226.gene:17761284"/>
<dbReference type="PaxDb" id="100226-SCO3661"/>
<dbReference type="GeneID" id="91385380"/>
<dbReference type="KEGG" id="sco:SCO3661"/>
<dbReference type="PATRIC" id="fig|100226.15.peg.3720"/>
<dbReference type="eggNOG" id="COG0542">
    <property type="taxonomic scope" value="Bacteria"/>
</dbReference>
<dbReference type="HOGENOM" id="CLU_005070_4_2_11"/>
<dbReference type="InParanoid" id="Q8CJV9"/>
<dbReference type="OrthoDB" id="9803641at2"/>
<dbReference type="PhylomeDB" id="Q8CJV9"/>
<dbReference type="Proteomes" id="UP000001973">
    <property type="component" value="Chromosome"/>
</dbReference>
<dbReference type="GO" id="GO:0005737">
    <property type="term" value="C:cytoplasm"/>
    <property type="evidence" value="ECO:0000318"/>
    <property type="project" value="GO_Central"/>
</dbReference>
<dbReference type="GO" id="GO:0005524">
    <property type="term" value="F:ATP binding"/>
    <property type="evidence" value="ECO:0007669"/>
    <property type="project" value="UniProtKB-KW"/>
</dbReference>
<dbReference type="GO" id="GO:0016887">
    <property type="term" value="F:ATP hydrolysis activity"/>
    <property type="evidence" value="ECO:0000318"/>
    <property type="project" value="GO_Central"/>
</dbReference>
<dbReference type="GO" id="GO:0034605">
    <property type="term" value="P:cellular response to heat"/>
    <property type="evidence" value="ECO:0000318"/>
    <property type="project" value="GO_Central"/>
</dbReference>
<dbReference type="GO" id="GO:0042026">
    <property type="term" value="P:protein refolding"/>
    <property type="evidence" value="ECO:0007669"/>
    <property type="project" value="InterPro"/>
</dbReference>
<dbReference type="CDD" id="cd00009">
    <property type="entry name" value="AAA"/>
    <property type="match status" value="1"/>
</dbReference>
<dbReference type="CDD" id="cd19499">
    <property type="entry name" value="RecA-like_ClpB_Hsp104-like"/>
    <property type="match status" value="1"/>
</dbReference>
<dbReference type="FunFam" id="1.10.8.60:FF:000017">
    <property type="entry name" value="ATP-dependent chaperone ClpB"/>
    <property type="match status" value="1"/>
</dbReference>
<dbReference type="FunFam" id="3.40.50.300:FF:000120">
    <property type="entry name" value="ATP-dependent chaperone ClpB"/>
    <property type="match status" value="1"/>
</dbReference>
<dbReference type="FunFam" id="3.40.50.300:FF:000025">
    <property type="entry name" value="ATP-dependent Clp protease subunit"/>
    <property type="match status" value="1"/>
</dbReference>
<dbReference type="FunFam" id="3.40.50.300:FF:000010">
    <property type="entry name" value="Chaperone clpB 1, putative"/>
    <property type="match status" value="1"/>
</dbReference>
<dbReference type="Gene3D" id="1.10.8.60">
    <property type="match status" value="1"/>
</dbReference>
<dbReference type="Gene3D" id="1.10.1780.10">
    <property type="entry name" value="Clp, N-terminal domain"/>
    <property type="match status" value="1"/>
</dbReference>
<dbReference type="Gene3D" id="3.40.50.300">
    <property type="entry name" value="P-loop containing nucleotide triphosphate hydrolases"/>
    <property type="match status" value="3"/>
</dbReference>
<dbReference type="InterPro" id="IPR003593">
    <property type="entry name" value="AAA+_ATPase"/>
</dbReference>
<dbReference type="InterPro" id="IPR003959">
    <property type="entry name" value="ATPase_AAA_core"/>
</dbReference>
<dbReference type="InterPro" id="IPR017730">
    <property type="entry name" value="Chaperonin_ClpB"/>
</dbReference>
<dbReference type="InterPro" id="IPR019489">
    <property type="entry name" value="Clp_ATPase_C"/>
</dbReference>
<dbReference type="InterPro" id="IPR036628">
    <property type="entry name" value="Clp_N_dom_sf"/>
</dbReference>
<dbReference type="InterPro" id="IPR004176">
    <property type="entry name" value="Clp_R_dom"/>
</dbReference>
<dbReference type="InterPro" id="IPR001270">
    <property type="entry name" value="ClpA/B"/>
</dbReference>
<dbReference type="InterPro" id="IPR018368">
    <property type="entry name" value="ClpA/B_CS1"/>
</dbReference>
<dbReference type="InterPro" id="IPR028299">
    <property type="entry name" value="ClpA/B_CS2"/>
</dbReference>
<dbReference type="InterPro" id="IPR041546">
    <property type="entry name" value="ClpA/ClpB_AAA_lid"/>
</dbReference>
<dbReference type="InterPro" id="IPR050130">
    <property type="entry name" value="ClpA_ClpB"/>
</dbReference>
<dbReference type="InterPro" id="IPR027417">
    <property type="entry name" value="P-loop_NTPase"/>
</dbReference>
<dbReference type="NCBIfam" id="TIGR03346">
    <property type="entry name" value="chaperone_ClpB"/>
    <property type="match status" value="1"/>
</dbReference>
<dbReference type="PANTHER" id="PTHR11638">
    <property type="entry name" value="ATP-DEPENDENT CLP PROTEASE"/>
    <property type="match status" value="1"/>
</dbReference>
<dbReference type="PANTHER" id="PTHR11638:SF18">
    <property type="entry name" value="HEAT SHOCK PROTEIN 104"/>
    <property type="match status" value="1"/>
</dbReference>
<dbReference type="Pfam" id="PF00004">
    <property type="entry name" value="AAA"/>
    <property type="match status" value="1"/>
</dbReference>
<dbReference type="Pfam" id="PF07724">
    <property type="entry name" value="AAA_2"/>
    <property type="match status" value="1"/>
</dbReference>
<dbReference type="Pfam" id="PF17871">
    <property type="entry name" value="AAA_lid_9"/>
    <property type="match status" value="1"/>
</dbReference>
<dbReference type="Pfam" id="PF02861">
    <property type="entry name" value="Clp_N"/>
    <property type="match status" value="2"/>
</dbReference>
<dbReference type="Pfam" id="PF10431">
    <property type="entry name" value="ClpB_D2-small"/>
    <property type="match status" value="1"/>
</dbReference>
<dbReference type="PRINTS" id="PR00300">
    <property type="entry name" value="CLPPROTEASEA"/>
</dbReference>
<dbReference type="SMART" id="SM00382">
    <property type="entry name" value="AAA"/>
    <property type="match status" value="2"/>
</dbReference>
<dbReference type="SMART" id="SM01086">
    <property type="entry name" value="ClpB_D2-small"/>
    <property type="match status" value="1"/>
</dbReference>
<dbReference type="SUPFAM" id="SSF81923">
    <property type="entry name" value="Double Clp-N motif"/>
    <property type="match status" value="1"/>
</dbReference>
<dbReference type="SUPFAM" id="SSF52540">
    <property type="entry name" value="P-loop containing nucleoside triphosphate hydrolases"/>
    <property type="match status" value="2"/>
</dbReference>
<dbReference type="PROSITE" id="PS51903">
    <property type="entry name" value="CLP_R"/>
    <property type="match status" value="1"/>
</dbReference>
<dbReference type="PROSITE" id="PS00870">
    <property type="entry name" value="CLPAB_1"/>
    <property type="match status" value="1"/>
</dbReference>
<dbReference type="PROSITE" id="PS00871">
    <property type="entry name" value="CLPAB_2"/>
    <property type="match status" value="1"/>
</dbReference>
<feature type="chain" id="PRO_0000191185" description="Chaperone protein ClpB">
    <location>
        <begin position="1"/>
        <end position="865"/>
    </location>
</feature>
<feature type="domain" description="Clp R" evidence="2">
    <location>
        <begin position="1"/>
        <end position="147"/>
    </location>
</feature>
<feature type="region of interest" description="Repeat 1" evidence="2">
    <location>
        <begin position="5"/>
        <end position="71"/>
    </location>
</feature>
<feature type="region of interest" description="Repeat 2" evidence="2">
    <location>
        <begin position="84"/>
        <end position="147"/>
    </location>
</feature>
<feature type="region of interest" description="NBD1" evidence="1">
    <location>
        <begin position="160"/>
        <end position="342"/>
    </location>
</feature>
<feature type="region of interest" description="Linker" evidence="1">
    <location>
        <begin position="343"/>
        <end position="549"/>
    </location>
</feature>
<feature type="region of interest" description="NBD2" evidence="1">
    <location>
        <begin position="559"/>
        <end position="767"/>
    </location>
</feature>
<feature type="region of interest" description="C-terminal" evidence="1">
    <location>
        <begin position="768"/>
        <end position="865"/>
    </location>
</feature>
<feature type="coiled-coil region" evidence="1">
    <location>
        <begin position="393"/>
        <end position="527"/>
    </location>
</feature>
<feature type="binding site" evidence="1">
    <location>
        <begin position="207"/>
        <end position="214"/>
    </location>
    <ligand>
        <name>ATP</name>
        <dbReference type="ChEBI" id="CHEBI:30616"/>
        <label>1</label>
    </ligand>
</feature>
<feature type="binding site" evidence="1">
    <location>
        <begin position="609"/>
        <end position="616"/>
    </location>
    <ligand>
        <name>ATP</name>
        <dbReference type="ChEBI" id="CHEBI:30616"/>
        <label>2</label>
    </ligand>
</feature>
<comment type="function">
    <text evidence="1">Part of a stress-induced multi-chaperone system, it is involved in the recovery of the cell from heat-induced damage, in cooperation with DnaK, DnaJ and GrpE. Acts before DnaK, in the processing of protein aggregates. Protein binding stimulates the ATPase activity; ATP hydrolysis unfolds the denatured protein aggregates, which probably helps expose new hydrophobic binding sites on the surface of ClpB-bound aggregates, contributing to the solubilization and refolding of denatured protein aggregates by DnaK (By similarity).</text>
</comment>
<comment type="subunit">
    <text evidence="1">Homohexamer. The oligomerization is ATP-dependent (By similarity).</text>
</comment>
<comment type="subcellular location">
    <subcellularLocation>
        <location evidence="3">Cytoplasm</location>
    </subcellularLocation>
</comment>
<comment type="domain">
    <text evidence="1">The Clp repeat (R) domain probably functions as a substrate-discriminating domain, recruiting aggregated proteins to the ClpB hexamer and/or stabilizing bound proteins. The NBD2 domain is responsible for oligomerization, whereas the NBD1 domain stabilizes the hexamer probably in an ATP-dependent manner. The movement of the coiled-coil domain is essential for ClpB ability to rescue proteins from an aggregated state, probably by pulling apart large aggregated proteins, which are bound between the coiled-coils motifs of adjacent ClpB subunits in the functional hexamer (By similarity).</text>
</comment>
<comment type="similarity">
    <text evidence="3">Belongs to the ClpA/ClpB family.</text>
</comment>
<sequence>MDAELTNRSRDAINAASNRAVTEGNADLTPAHLLLALLQGQDNENITDLLAAVEADLAAVRTGAERIVAGLPSVTGSTVAPPQPSREMLAVVADAQARAKELGDEYLSTEHLLLGIAAKGGAAGEVLEGQGASAKKLQEAFRKARGGRRVTTADPEGQYKALEKFGTDLTAAARDGKLDPVIGRDQEIRRVVQVLSRRTKNNPVLIGEPGVGKTAVVEGLAQRIVKGDVPESLKDKRLVALDLGAMVAGAKYRGEFEERLKTVLAEIKDSDGQVVTFIDELHTVVGAGAGGDSAMDAGNMLKPMLARGELRMVGATTLDEYRERIEKDPALERRFQQVLVAEPTVEDSIAILRGLKGRYEAHHKVQIADSALVAAASLSDRYITSRFLPDKAIDLVDEAASRLRMEIDSSPVEIDELQRSVDRLKMEELAIGKETDAASLERLERLRRDLADKEEELRGLTARWEKEKQSLNRVGELKEKLDELRGQAERAQRDGDFDTASKLLYGEIPDLERDLEAASEAEEEVARDTMVKEEVGADDIADVVASWTGIPAGRLLEGETQKLLRMEDELGKRLIGQTQAVRAVSDAVRRSRAGIADPDRPTGSFLFLGPTGVGKTELAKALADFLFDDERAMVRIDMSEYSEKHSVARLVGAPPGYVGYEEGGQLTEAVRRRPYTVVLLDEVEKAHPEVFDILLQVLDDGRLTDGQGRTVDFRNTILVLTSNLGSQYLVDPTTGEAEKKQQVLEVVRSSFKPEFLNRLDDLVVFSALSQEELSRIARLQINGLARRLAERRLTLEVTDEALAWLAEEGNDPAYGARPLRRLVQTAIGDRLAREILSGEIKDGDTVRVDRFGDELIVGPASGKTL</sequence>
<keyword id="KW-0067">ATP-binding</keyword>
<keyword id="KW-0143">Chaperone</keyword>
<keyword id="KW-0175">Coiled coil</keyword>
<keyword id="KW-0963">Cytoplasm</keyword>
<keyword id="KW-0547">Nucleotide-binding</keyword>
<keyword id="KW-1185">Reference proteome</keyword>
<keyword id="KW-0677">Repeat</keyword>
<keyword id="KW-0346">Stress response</keyword>
<reference key="1">
    <citation type="journal article" date="2002" name="Nature">
        <title>Complete genome sequence of the model actinomycete Streptomyces coelicolor A3(2).</title>
        <authorList>
            <person name="Bentley S.D."/>
            <person name="Chater K.F."/>
            <person name="Cerdeno-Tarraga A.-M."/>
            <person name="Challis G.L."/>
            <person name="Thomson N.R."/>
            <person name="James K.D."/>
            <person name="Harris D.E."/>
            <person name="Quail M.A."/>
            <person name="Kieser H."/>
            <person name="Harper D."/>
            <person name="Bateman A."/>
            <person name="Brown S."/>
            <person name="Chandra G."/>
            <person name="Chen C.W."/>
            <person name="Collins M."/>
            <person name="Cronin A."/>
            <person name="Fraser A."/>
            <person name="Goble A."/>
            <person name="Hidalgo J."/>
            <person name="Hornsby T."/>
            <person name="Howarth S."/>
            <person name="Huang C.-H."/>
            <person name="Kieser T."/>
            <person name="Larke L."/>
            <person name="Murphy L.D."/>
            <person name="Oliver K."/>
            <person name="O'Neil S."/>
            <person name="Rabbinowitsch E."/>
            <person name="Rajandream M.A."/>
            <person name="Rutherford K.M."/>
            <person name="Rutter S."/>
            <person name="Seeger K."/>
            <person name="Saunders D."/>
            <person name="Sharp S."/>
            <person name="Squares R."/>
            <person name="Squares S."/>
            <person name="Taylor K."/>
            <person name="Warren T."/>
            <person name="Wietzorrek A."/>
            <person name="Woodward J.R."/>
            <person name="Barrell B.G."/>
            <person name="Parkhill J."/>
            <person name="Hopwood D.A."/>
        </authorList>
    </citation>
    <scope>NUCLEOTIDE SEQUENCE [LARGE SCALE GENOMIC DNA]</scope>
    <source>
        <strain>ATCC BAA-471 / A3(2) / M145</strain>
    </source>
</reference>
<accession>Q8CJV9</accession>
<name>CLPB_STRCO</name>
<organism>
    <name type="scientific">Streptomyces coelicolor (strain ATCC BAA-471 / A3(2) / M145)</name>
    <dbReference type="NCBI Taxonomy" id="100226"/>
    <lineage>
        <taxon>Bacteria</taxon>
        <taxon>Bacillati</taxon>
        <taxon>Actinomycetota</taxon>
        <taxon>Actinomycetes</taxon>
        <taxon>Kitasatosporales</taxon>
        <taxon>Streptomycetaceae</taxon>
        <taxon>Streptomyces</taxon>
        <taxon>Streptomyces albidoflavus group</taxon>
    </lineage>
</organism>
<gene>
    <name type="primary">clpB</name>
    <name type="ordered locus">SCO3661</name>
    <name type="ORF">SCH10.39c</name>
    <name type="ORF">SCH44.01c</name>
</gene>
<proteinExistence type="inferred from homology"/>